<organism>
    <name type="scientific">Bordetella bronchiseptica (strain ATCC BAA-588 / NCTC 13252 / RB50)</name>
    <name type="common">Alcaligenes bronchisepticus</name>
    <dbReference type="NCBI Taxonomy" id="257310"/>
    <lineage>
        <taxon>Bacteria</taxon>
        <taxon>Pseudomonadati</taxon>
        <taxon>Pseudomonadota</taxon>
        <taxon>Betaproteobacteria</taxon>
        <taxon>Burkholderiales</taxon>
        <taxon>Alcaligenaceae</taxon>
        <taxon>Bordetella</taxon>
    </lineage>
</organism>
<reference key="1">
    <citation type="journal article" date="2003" name="Nat. Genet.">
        <title>Comparative analysis of the genome sequences of Bordetella pertussis, Bordetella parapertussis and Bordetella bronchiseptica.</title>
        <authorList>
            <person name="Parkhill J."/>
            <person name="Sebaihia M."/>
            <person name="Preston A."/>
            <person name="Murphy L.D."/>
            <person name="Thomson N.R."/>
            <person name="Harris D.E."/>
            <person name="Holden M.T.G."/>
            <person name="Churcher C.M."/>
            <person name="Bentley S.D."/>
            <person name="Mungall K.L."/>
            <person name="Cerdeno-Tarraga A.-M."/>
            <person name="Temple L."/>
            <person name="James K.D."/>
            <person name="Harris B."/>
            <person name="Quail M.A."/>
            <person name="Achtman M."/>
            <person name="Atkin R."/>
            <person name="Baker S."/>
            <person name="Basham D."/>
            <person name="Bason N."/>
            <person name="Cherevach I."/>
            <person name="Chillingworth T."/>
            <person name="Collins M."/>
            <person name="Cronin A."/>
            <person name="Davis P."/>
            <person name="Doggett J."/>
            <person name="Feltwell T."/>
            <person name="Goble A."/>
            <person name="Hamlin N."/>
            <person name="Hauser H."/>
            <person name="Holroyd S."/>
            <person name="Jagels K."/>
            <person name="Leather S."/>
            <person name="Moule S."/>
            <person name="Norberczak H."/>
            <person name="O'Neil S."/>
            <person name="Ormond D."/>
            <person name="Price C."/>
            <person name="Rabbinowitsch E."/>
            <person name="Rutter S."/>
            <person name="Sanders M."/>
            <person name="Saunders D."/>
            <person name="Seeger K."/>
            <person name="Sharp S."/>
            <person name="Simmonds M."/>
            <person name="Skelton J."/>
            <person name="Squares R."/>
            <person name="Squares S."/>
            <person name="Stevens K."/>
            <person name="Unwin L."/>
            <person name="Whitehead S."/>
            <person name="Barrell B.G."/>
            <person name="Maskell D.J."/>
        </authorList>
    </citation>
    <scope>NUCLEOTIDE SEQUENCE [LARGE SCALE GENOMIC DNA]</scope>
    <source>
        <strain>ATCC BAA-588 / NCTC 13252 / RB50</strain>
    </source>
</reference>
<keyword id="KW-0997">Cell inner membrane</keyword>
<keyword id="KW-1003">Cell membrane</keyword>
<keyword id="KW-0406">Ion transport</keyword>
<keyword id="KW-0472">Membrane</keyword>
<keyword id="KW-0630">Potassium</keyword>
<keyword id="KW-0633">Potassium transport</keyword>
<keyword id="KW-0812">Transmembrane</keyword>
<keyword id="KW-1133">Transmembrane helix</keyword>
<keyword id="KW-0813">Transport</keyword>
<protein>
    <recommendedName>
        <fullName evidence="1">Potassium-transporting ATPase potassium-binding subunit</fullName>
    </recommendedName>
    <alternativeName>
        <fullName evidence="1">ATP phosphohydrolase [potassium-transporting] A chain</fullName>
    </alternativeName>
    <alternativeName>
        <fullName evidence="1">Potassium-binding and translocating subunit A</fullName>
    </alternativeName>
    <alternativeName>
        <fullName evidence="1">Potassium-translocating ATPase A chain</fullName>
    </alternativeName>
</protein>
<sequence length="594" mass="61954">MNADFLGLLLLYLAILLCAAPLLGRHIRQAMNGERTWLTAWGQPLERGLYRLAGVDPAAEMDWRRYAVAMLVFNVLGVLAVYALQRLQGWLPLNPAGLPGVAPDSALNTAISFVTNTNWQGYAGESTMSYLTQMLALTVQNFVSAATGIAVLIALVRGLARHSAATLGNFWADLVRATLYVLLPLSFILALALVSQGVVQNLDPYVEAQTVQAQQYETARLDAQGQPMTGPAGQPLTDTVVTRVQNLPMGPVASQEAIKLLGTNGGGFFNANSAHPYENPNAWSNLLEMLAILLIPAALCWTFGEMVGSRRQGVAILAAMTVLFAGFSASAAYFEQQPTPALRQAEAALLADGGNLEGKEARFGVAATALFATVTTAASCGAVNGMHDSFSALGGVTPLLQMQLGEVIYGGVGSGLYGMLAFAILAVFIAGLMIGRTPEYLGKKIEALDMQMVALVILATPALVLAGTAVAVLADAGRAGVLNPGAHGFSEILYAMSSAANNNGSAFAGLSANTPFYNVLLGLAMWFGRYTIIVAILALAGSLAAKPRLPASVGGMPTTGPLFVALLVGAVLLVGALTYVPALALGPVAEHLQP</sequence>
<gene>
    <name evidence="1" type="primary">kdpA</name>
    <name type="ordered locus">BB3917</name>
</gene>
<comment type="function">
    <text evidence="1">Part of the high-affinity ATP-driven potassium transport (or Kdp) system, which catalyzes the hydrolysis of ATP coupled with the electrogenic transport of potassium into the cytoplasm. This subunit binds the periplasmic potassium ions and delivers the ions to the membrane domain of KdpB through an intramembrane tunnel.</text>
</comment>
<comment type="subunit">
    <text evidence="1">The system is composed of three essential subunits: KdpA, KdpB and KdpC.</text>
</comment>
<comment type="subcellular location">
    <subcellularLocation>
        <location evidence="1">Cell inner membrane</location>
        <topology evidence="1">Multi-pass membrane protein</topology>
    </subcellularLocation>
</comment>
<comment type="similarity">
    <text evidence="1">Belongs to the KdpA family.</text>
</comment>
<feature type="chain" id="PRO_0000166483" description="Potassium-transporting ATPase potassium-binding subunit">
    <location>
        <begin position="1"/>
        <end position="594"/>
    </location>
</feature>
<feature type="transmembrane region" description="Helical" evidence="1">
    <location>
        <begin position="3"/>
        <end position="23"/>
    </location>
</feature>
<feature type="transmembrane region" description="Helical" evidence="1">
    <location>
        <begin position="67"/>
        <end position="87"/>
    </location>
</feature>
<feature type="transmembrane region" description="Helical" evidence="1">
    <location>
        <begin position="136"/>
        <end position="156"/>
    </location>
</feature>
<feature type="transmembrane region" description="Helical" evidence="1">
    <location>
        <begin position="179"/>
        <end position="199"/>
    </location>
</feature>
<feature type="transmembrane region" description="Helical" evidence="1">
    <location>
        <begin position="287"/>
        <end position="307"/>
    </location>
</feature>
<feature type="transmembrane region" description="Helical" evidence="1">
    <location>
        <begin position="314"/>
        <end position="334"/>
    </location>
</feature>
<feature type="transmembrane region" description="Helical" evidence="1">
    <location>
        <begin position="415"/>
        <end position="435"/>
    </location>
</feature>
<feature type="transmembrane region" description="Helical" evidence="1">
    <location>
        <begin position="453"/>
        <end position="473"/>
    </location>
</feature>
<feature type="transmembrane region" description="Helical" evidence="1">
    <location>
        <begin position="519"/>
        <end position="539"/>
    </location>
</feature>
<feature type="transmembrane region" description="Helical" evidence="1">
    <location>
        <begin position="562"/>
        <end position="582"/>
    </location>
</feature>
<dbReference type="EMBL" id="BX640448">
    <property type="protein sequence ID" value="CAE35890.1"/>
    <property type="molecule type" value="Genomic_DNA"/>
</dbReference>
<dbReference type="RefSeq" id="WP_010926986.1">
    <property type="nucleotide sequence ID" value="NC_002927.3"/>
</dbReference>
<dbReference type="SMR" id="Q7WCL8"/>
<dbReference type="KEGG" id="bbr:BB3917"/>
<dbReference type="eggNOG" id="COG2060">
    <property type="taxonomic scope" value="Bacteria"/>
</dbReference>
<dbReference type="HOGENOM" id="CLU_018614_3_0_4"/>
<dbReference type="Proteomes" id="UP000001027">
    <property type="component" value="Chromosome"/>
</dbReference>
<dbReference type="GO" id="GO:0005886">
    <property type="term" value="C:plasma membrane"/>
    <property type="evidence" value="ECO:0007669"/>
    <property type="project" value="UniProtKB-SubCell"/>
</dbReference>
<dbReference type="GO" id="GO:0008556">
    <property type="term" value="F:P-type potassium transmembrane transporter activity"/>
    <property type="evidence" value="ECO:0007669"/>
    <property type="project" value="InterPro"/>
</dbReference>
<dbReference type="GO" id="GO:0030955">
    <property type="term" value="F:potassium ion binding"/>
    <property type="evidence" value="ECO:0007669"/>
    <property type="project" value="UniProtKB-UniRule"/>
</dbReference>
<dbReference type="HAMAP" id="MF_00275">
    <property type="entry name" value="KdpA"/>
    <property type="match status" value="1"/>
</dbReference>
<dbReference type="InterPro" id="IPR004623">
    <property type="entry name" value="KdpA"/>
</dbReference>
<dbReference type="NCBIfam" id="TIGR00680">
    <property type="entry name" value="kdpA"/>
    <property type="match status" value="1"/>
</dbReference>
<dbReference type="PANTHER" id="PTHR30607">
    <property type="entry name" value="POTASSIUM-TRANSPORTING ATPASE A CHAIN"/>
    <property type="match status" value="1"/>
</dbReference>
<dbReference type="PANTHER" id="PTHR30607:SF2">
    <property type="entry name" value="POTASSIUM-TRANSPORTING ATPASE POTASSIUM-BINDING SUBUNIT"/>
    <property type="match status" value="1"/>
</dbReference>
<dbReference type="Pfam" id="PF03814">
    <property type="entry name" value="KdpA"/>
    <property type="match status" value="1"/>
</dbReference>
<dbReference type="PIRSF" id="PIRSF001294">
    <property type="entry name" value="K_ATPaseA"/>
    <property type="match status" value="1"/>
</dbReference>
<accession>Q7WCL8</accession>
<name>KDPA_BORBR</name>
<proteinExistence type="inferred from homology"/>
<evidence type="ECO:0000255" key="1">
    <source>
        <dbReference type="HAMAP-Rule" id="MF_00275"/>
    </source>
</evidence>